<comment type="function">
    <text evidence="1">Binds directly to 23S ribosomal RNA and is necessary for the in vitro assembly process of the 50S ribosomal subunit. It is not involved in the protein synthesizing functions of that subunit.</text>
</comment>
<comment type="similarity">
    <text evidence="1">Belongs to the bacterial ribosomal protein bL20 family.</text>
</comment>
<organism>
    <name type="scientific">Rhizobium etli (strain CIAT 652)</name>
    <dbReference type="NCBI Taxonomy" id="491916"/>
    <lineage>
        <taxon>Bacteria</taxon>
        <taxon>Pseudomonadati</taxon>
        <taxon>Pseudomonadota</taxon>
        <taxon>Alphaproteobacteria</taxon>
        <taxon>Hyphomicrobiales</taxon>
        <taxon>Rhizobiaceae</taxon>
        <taxon>Rhizobium/Agrobacterium group</taxon>
        <taxon>Rhizobium</taxon>
    </lineage>
</organism>
<feature type="chain" id="PRO_1000122359" description="Large ribosomal subunit protein bL20">
    <location>
        <begin position="1"/>
        <end position="134"/>
    </location>
</feature>
<sequence length="134" mass="15121">MARVKRGVTAHAKHKKVLKAAKGFYGRRKNTIRAAKAAVDRSKQYAYRDRKVNKRNFRALWIQRINAAVREFGLTYGRFIDGLNKAGIEVDRKVLSDMAIHEPEAFGALVNAAKKALEYLKETGTANEFEGAVR</sequence>
<protein>
    <recommendedName>
        <fullName evidence="1">Large ribosomal subunit protein bL20</fullName>
    </recommendedName>
    <alternativeName>
        <fullName evidence="2">50S ribosomal protein L20</fullName>
    </alternativeName>
</protein>
<evidence type="ECO:0000255" key="1">
    <source>
        <dbReference type="HAMAP-Rule" id="MF_00382"/>
    </source>
</evidence>
<evidence type="ECO:0000305" key="2"/>
<name>RL20_RHIE6</name>
<reference key="1">
    <citation type="journal article" date="2010" name="Appl. Environ. Microbiol.">
        <title>Conserved symbiotic plasmid DNA sequences in the multireplicon pangenomic structure of Rhizobium etli.</title>
        <authorList>
            <person name="Gonzalez V."/>
            <person name="Acosta J.L."/>
            <person name="Santamaria R.I."/>
            <person name="Bustos P."/>
            <person name="Fernandez J.L."/>
            <person name="Hernandez Gonzalez I.L."/>
            <person name="Diaz R."/>
            <person name="Flores M."/>
            <person name="Palacios R."/>
            <person name="Mora J."/>
            <person name="Davila G."/>
        </authorList>
    </citation>
    <scope>NUCLEOTIDE SEQUENCE [LARGE SCALE GENOMIC DNA]</scope>
    <source>
        <strain>CIAT 652</strain>
    </source>
</reference>
<accession>B3PYE1</accession>
<proteinExistence type="inferred from homology"/>
<gene>
    <name evidence="1" type="primary">rplT</name>
    <name type="ordered locus">RHECIAT_CH0000298</name>
</gene>
<dbReference type="EMBL" id="CP001074">
    <property type="protein sequence ID" value="ACE89292.1"/>
    <property type="molecule type" value="Genomic_DNA"/>
</dbReference>
<dbReference type="SMR" id="B3PYE1"/>
<dbReference type="KEGG" id="rec:RHECIAT_CH0000298"/>
<dbReference type="eggNOG" id="COG0292">
    <property type="taxonomic scope" value="Bacteria"/>
</dbReference>
<dbReference type="HOGENOM" id="CLU_123265_0_1_5"/>
<dbReference type="Proteomes" id="UP000008817">
    <property type="component" value="Chromosome"/>
</dbReference>
<dbReference type="GO" id="GO:1990904">
    <property type="term" value="C:ribonucleoprotein complex"/>
    <property type="evidence" value="ECO:0007669"/>
    <property type="project" value="UniProtKB-KW"/>
</dbReference>
<dbReference type="GO" id="GO:0005840">
    <property type="term" value="C:ribosome"/>
    <property type="evidence" value="ECO:0007669"/>
    <property type="project" value="UniProtKB-KW"/>
</dbReference>
<dbReference type="GO" id="GO:0019843">
    <property type="term" value="F:rRNA binding"/>
    <property type="evidence" value="ECO:0007669"/>
    <property type="project" value="UniProtKB-UniRule"/>
</dbReference>
<dbReference type="GO" id="GO:0003735">
    <property type="term" value="F:structural constituent of ribosome"/>
    <property type="evidence" value="ECO:0007669"/>
    <property type="project" value="InterPro"/>
</dbReference>
<dbReference type="GO" id="GO:0000027">
    <property type="term" value="P:ribosomal large subunit assembly"/>
    <property type="evidence" value="ECO:0007669"/>
    <property type="project" value="UniProtKB-UniRule"/>
</dbReference>
<dbReference type="GO" id="GO:0006412">
    <property type="term" value="P:translation"/>
    <property type="evidence" value="ECO:0007669"/>
    <property type="project" value="InterPro"/>
</dbReference>
<dbReference type="CDD" id="cd07026">
    <property type="entry name" value="Ribosomal_L20"/>
    <property type="match status" value="1"/>
</dbReference>
<dbReference type="FunFam" id="1.10.1900.20:FF:000001">
    <property type="entry name" value="50S ribosomal protein L20"/>
    <property type="match status" value="1"/>
</dbReference>
<dbReference type="Gene3D" id="6.10.160.10">
    <property type="match status" value="1"/>
</dbReference>
<dbReference type="Gene3D" id="1.10.1900.20">
    <property type="entry name" value="Ribosomal protein L20"/>
    <property type="match status" value="1"/>
</dbReference>
<dbReference type="HAMAP" id="MF_00382">
    <property type="entry name" value="Ribosomal_bL20"/>
    <property type="match status" value="1"/>
</dbReference>
<dbReference type="InterPro" id="IPR005813">
    <property type="entry name" value="Ribosomal_bL20"/>
</dbReference>
<dbReference type="InterPro" id="IPR049946">
    <property type="entry name" value="RIBOSOMAL_L20_CS"/>
</dbReference>
<dbReference type="InterPro" id="IPR035566">
    <property type="entry name" value="Ribosomal_protein_bL20_C"/>
</dbReference>
<dbReference type="NCBIfam" id="TIGR01032">
    <property type="entry name" value="rplT_bact"/>
    <property type="match status" value="1"/>
</dbReference>
<dbReference type="PANTHER" id="PTHR10986">
    <property type="entry name" value="39S RIBOSOMAL PROTEIN L20"/>
    <property type="match status" value="1"/>
</dbReference>
<dbReference type="Pfam" id="PF00453">
    <property type="entry name" value="Ribosomal_L20"/>
    <property type="match status" value="1"/>
</dbReference>
<dbReference type="PRINTS" id="PR00062">
    <property type="entry name" value="RIBOSOMALL20"/>
</dbReference>
<dbReference type="SUPFAM" id="SSF74731">
    <property type="entry name" value="Ribosomal protein L20"/>
    <property type="match status" value="1"/>
</dbReference>
<dbReference type="PROSITE" id="PS00937">
    <property type="entry name" value="RIBOSOMAL_L20"/>
    <property type="match status" value="1"/>
</dbReference>
<keyword id="KW-0687">Ribonucleoprotein</keyword>
<keyword id="KW-0689">Ribosomal protein</keyword>
<keyword id="KW-0694">RNA-binding</keyword>
<keyword id="KW-0699">rRNA-binding</keyword>